<proteinExistence type="evidence at protein level"/>
<protein>
    <recommendedName>
        <fullName>Spindle pole body-associated protein CIK1</fullName>
    </recommendedName>
    <alternativeName>
        <fullName>Chromosome instability and karyogamy protein 1</fullName>
    </alternativeName>
</protein>
<accession>Q01649</accession>
<accession>D6W023</accession>
<organism>
    <name type="scientific">Saccharomyces cerevisiae (strain ATCC 204508 / S288c)</name>
    <name type="common">Baker's yeast</name>
    <dbReference type="NCBI Taxonomy" id="559292"/>
    <lineage>
        <taxon>Eukaryota</taxon>
        <taxon>Fungi</taxon>
        <taxon>Dikarya</taxon>
        <taxon>Ascomycota</taxon>
        <taxon>Saccharomycotina</taxon>
        <taxon>Saccharomycetes</taxon>
        <taxon>Saccharomycetales</taxon>
        <taxon>Saccharomycetaceae</taxon>
        <taxon>Saccharomyces</taxon>
    </lineage>
</organism>
<sequence length="594" mass="69070">MNNSKIPKLSFHSDPNNVTRDFPKTKRQKVQKREMDMILTPNNNKLNILHSSGSGIRRCYTDDTSATYTKKLTFGGDPKIIERVKNNERKVRKDIDSLLNAISEIEKESVRIHARELPAITLELDAKVKACRELQNEIDGLSTEMDLKDNQCDLQRKNVELSSKNIVSMHAVKVQEFENDLEEELSNAKREWTYKLMEVENLKPDERLTDEMRQLKTEFEEVNRKLFILQNENENECKNYKKELDKKFEIFKKVKNDARIELDGEQERLSKVLKDLQDTHGELKENIKTCRDEFNDFEKRIGEAEVNFHSMELAVVPLKKKLASTSQALTQVQEEKKQVEGEANNWKKKYVNELEKVQQELYTRQNLATSIEEIKGYTRCFAYANERQMPDEFHINYVDRCICENSGEKRVQVFDRVVLEEIHKDHKRLYNECIPFLEKYISKLINCSIIVVSQQPTAPMKKTLLKQLIEQYGENYKMTLNILHLDGSIKHSDVGLDNPTEIRDLSQDEECMNILTLDTKLGKDEESHSMNIYIGSMSTVQLNRELDDAPSVLSHILTKTKQCFVFKINAGENIEKALALAGKLKRTITLPQLD</sequence>
<evidence type="ECO:0000255" key="1"/>
<evidence type="ECO:0000256" key="2">
    <source>
        <dbReference type="SAM" id="MobiDB-lite"/>
    </source>
</evidence>
<evidence type="ECO:0000269" key="3">
    <source>
    </source>
</evidence>
<evidence type="ECO:0000269" key="4">
    <source>
    </source>
</evidence>
<evidence type="ECO:0000269" key="5">
    <source>
    </source>
</evidence>
<evidence type="ECO:0000269" key="6">
    <source>
    </source>
</evidence>
<evidence type="ECO:0000269" key="7">
    <source>
    </source>
</evidence>
<evidence type="ECO:0000269" key="8">
    <source>
    </source>
</evidence>
<dbReference type="EMBL" id="M96439">
    <property type="protein sequence ID" value="AAA34494.1"/>
    <property type="molecule type" value="Genomic_DNA"/>
</dbReference>
<dbReference type="EMBL" id="Z47815">
    <property type="protein sequence ID" value="CAA87820.1"/>
    <property type="molecule type" value="Genomic_DNA"/>
</dbReference>
<dbReference type="EMBL" id="BK006946">
    <property type="protein sequence ID" value="DAA10097.1"/>
    <property type="molecule type" value="Genomic_DNA"/>
</dbReference>
<dbReference type="PIR" id="A44073">
    <property type="entry name" value="A44073"/>
</dbReference>
<dbReference type="RefSeq" id="NP_013925.1">
    <property type="nucleotide sequence ID" value="NM_001182705.1"/>
</dbReference>
<dbReference type="SMR" id="Q01649"/>
<dbReference type="BioGRID" id="35376">
    <property type="interactions" value="536"/>
</dbReference>
<dbReference type="DIP" id="DIP-192N"/>
<dbReference type="FunCoup" id="Q01649">
    <property type="interactions" value="278"/>
</dbReference>
<dbReference type="IntAct" id="Q01649">
    <property type="interactions" value="42"/>
</dbReference>
<dbReference type="MINT" id="Q01649"/>
<dbReference type="STRING" id="4932.YMR198W"/>
<dbReference type="iPTMnet" id="Q01649"/>
<dbReference type="PaxDb" id="4932-YMR198W"/>
<dbReference type="PeptideAtlas" id="Q01649"/>
<dbReference type="EnsemblFungi" id="YMR198W_mRNA">
    <property type="protein sequence ID" value="YMR198W"/>
    <property type="gene ID" value="YMR198W"/>
</dbReference>
<dbReference type="GeneID" id="855238"/>
<dbReference type="KEGG" id="sce:YMR198W"/>
<dbReference type="AGR" id="SGD:S000004811"/>
<dbReference type="SGD" id="S000004811">
    <property type="gene designation" value="CIK1"/>
</dbReference>
<dbReference type="VEuPathDB" id="FungiDB:YMR198W"/>
<dbReference type="eggNOG" id="ENOG502RIY9">
    <property type="taxonomic scope" value="Eukaryota"/>
</dbReference>
<dbReference type="GeneTree" id="ENSGT00940000176415"/>
<dbReference type="HOGENOM" id="CLU_025801_0_0_1"/>
<dbReference type="InParanoid" id="Q01649"/>
<dbReference type="OMA" id="CFAYANE"/>
<dbReference type="OrthoDB" id="4067584at2759"/>
<dbReference type="BioCyc" id="YEAST:G3O-32885-MONOMER"/>
<dbReference type="BioGRID-ORCS" id="855238">
    <property type="hits" value="6 hits in 10 CRISPR screens"/>
</dbReference>
<dbReference type="CD-CODE" id="876000F7">
    <property type="entry name" value="Centrosome"/>
</dbReference>
<dbReference type="PRO" id="PR:Q01649"/>
<dbReference type="Proteomes" id="UP000002311">
    <property type="component" value="Chromosome XIII"/>
</dbReference>
<dbReference type="RNAct" id="Q01649">
    <property type="molecule type" value="protein"/>
</dbReference>
<dbReference type="GO" id="GO:0005881">
    <property type="term" value="C:cytoplasmic microtubule"/>
    <property type="evidence" value="ECO:0000314"/>
    <property type="project" value="UniProtKB"/>
</dbReference>
<dbReference type="GO" id="GO:0005871">
    <property type="term" value="C:kinesin complex"/>
    <property type="evidence" value="ECO:0000314"/>
    <property type="project" value="SGD"/>
</dbReference>
<dbReference type="GO" id="GO:0005634">
    <property type="term" value="C:nucleus"/>
    <property type="evidence" value="ECO:0007005"/>
    <property type="project" value="SGD"/>
</dbReference>
<dbReference type="GO" id="GO:0005819">
    <property type="term" value="C:spindle"/>
    <property type="evidence" value="ECO:0000314"/>
    <property type="project" value="SGD"/>
</dbReference>
<dbReference type="GO" id="GO:0005816">
    <property type="term" value="C:spindle pole body"/>
    <property type="evidence" value="ECO:0000314"/>
    <property type="project" value="SGD"/>
</dbReference>
<dbReference type="GO" id="GO:0008093">
    <property type="term" value="F:cytoskeletal anchor activity"/>
    <property type="evidence" value="ECO:0000314"/>
    <property type="project" value="UniProtKB"/>
</dbReference>
<dbReference type="GO" id="GO:0008017">
    <property type="term" value="F:microtubule binding"/>
    <property type="evidence" value="ECO:0007669"/>
    <property type="project" value="InterPro"/>
</dbReference>
<dbReference type="GO" id="GO:0003777">
    <property type="term" value="F:microtubule motor activity"/>
    <property type="evidence" value="ECO:0000315"/>
    <property type="project" value="SGD"/>
</dbReference>
<dbReference type="GO" id="GO:0000742">
    <property type="term" value="P:karyogamy involved in conjugation with cellular fusion"/>
    <property type="evidence" value="ECO:0000315"/>
    <property type="project" value="UniProtKB"/>
</dbReference>
<dbReference type="GO" id="GO:0051321">
    <property type="term" value="P:meiotic cell cycle"/>
    <property type="evidence" value="ECO:0000314"/>
    <property type="project" value="SGD"/>
</dbReference>
<dbReference type="GO" id="GO:0051256">
    <property type="term" value="P:mitotic spindle midzone assembly"/>
    <property type="evidence" value="ECO:0000315"/>
    <property type="project" value="UniProtKB"/>
</dbReference>
<dbReference type="GO" id="GO:0000743">
    <property type="term" value="P:nuclear migration involved in conjugation with cellular fusion"/>
    <property type="evidence" value="ECO:0000315"/>
    <property type="project" value="SGD"/>
</dbReference>
<dbReference type="GO" id="GO:0060236">
    <property type="term" value="P:regulation of mitotic spindle organization"/>
    <property type="evidence" value="ECO:0000315"/>
    <property type="project" value="SGD"/>
</dbReference>
<dbReference type="Gene3D" id="3.40.850.20">
    <property type="match status" value="1"/>
</dbReference>
<dbReference type="InterPro" id="IPR031852">
    <property type="entry name" value="Vik1/Cik1_MT-bd"/>
</dbReference>
<dbReference type="Pfam" id="PF16796">
    <property type="entry name" value="Microtub_bd"/>
    <property type="match status" value="1"/>
</dbReference>
<name>CIK1_YEAST</name>
<feature type="chain" id="PRO_0000089750" description="Spindle pole body-associated protein CIK1">
    <location>
        <begin position="1"/>
        <end position="594"/>
    </location>
</feature>
<feature type="region of interest" description="Disordered" evidence="2">
    <location>
        <begin position="1"/>
        <end position="29"/>
    </location>
</feature>
<feature type="coiled-coil region" evidence="1">
    <location>
        <begin position="81"/>
        <end position="360"/>
    </location>
</feature>
<comment type="function">
    <text evidence="3 4 6 7 8">Together with the minus end-directed microtubule motor KAR3, involved in spindle midzone assembly, karyogamy (nuclear fusion) during mating, and with an essential function in meiosis I (PubMed:17382884, PubMed:25313961, PubMed:8106549). To contribute to spindle midzone assembly during mitotic metaphase, the KAR3-CIK1 motor cross-links anti-parallel microtubules to align them on the spindle axis; as the motor travels polewards splayed microtubules are pulled into alignment (PubMed:25313961). During the karyogamy (nuclear fusion) step of mating, KAR3-CIK1 cross-links antiparallel cytoplasmic microtubules emanating from the spindle pole bodies of mating partners; the motor activity of KAR3 creates the force that pulls the nuclei together by sliding cross-linked microtubules past one another (PubMed:10087265, PubMed:8106549). KAR3-CIK1 promotes microtubule shortening predominantly from the microtubule plus-end (PubMed:17382884). Required for interhomolog recombination, synapsis of homologous chromosomes and establishment of a meiosis I spindle (PubMed:11729143).</text>
</comment>
<comment type="subunit">
    <text evidence="3 6 8">Interacts with KAR3; the interaction is direct.</text>
</comment>
<comment type="subcellular location">
    <subcellularLocation>
        <location evidence="4">Nucleus</location>
    </subcellularLocation>
    <subcellularLocation>
        <location evidence="4">Cytoplasm</location>
        <location evidence="4">Cytoskeleton</location>
        <location evidence="4">Microtubule organizing center</location>
        <location evidence="4">Spindle pole body</location>
    </subcellularLocation>
    <subcellularLocation>
        <location evidence="4 7">Cytoplasm</location>
        <location evidence="4 7">Cytoskeleton</location>
        <location evidence="4 7">Spindle</location>
    </subcellularLocation>
    <subcellularLocation>
        <location evidence="8">Cytoplasm</location>
        <location evidence="8">Cytoskeleton</location>
    </subcellularLocation>
    <text evidence="4 8">Localization to the spindle pole body is infrequent in meiotic cells (PubMed:11729143). Localizes to cytoplasmic microtubules during mating (PubMed:8106549).</text>
</comment>
<comment type="induction">
    <text evidence="3">By alpha factor.</text>
</comment>
<comment type="disruption phenotype">
    <text evidence="7 8">Short mitotic metaphase spindles with splayed microtubules increasing spindle width (PubMed:25313961). During karyogamy (nuclear fusion) of mating, abolishes the formation of a microtubule bridge between the two nuclei thereby leading to a failure in nuclear fusion (PubMed:8106549).</text>
</comment>
<comment type="miscellaneous">
    <text evidence="5">Present with 98 molecules/cell in log phase SD medium.</text>
</comment>
<gene>
    <name type="primary">CIK1</name>
    <name type="ordered locus">YMR198W</name>
    <name type="ORF">YM9646.11</name>
</gene>
<keyword id="KW-0175">Coiled coil</keyword>
<keyword id="KW-0963">Cytoplasm</keyword>
<keyword id="KW-0206">Cytoskeleton</keyword>
<keyword id="KW-0493">Microtubule</keyword>
<keyword id="KW-0539">Nucleus</keyword>
<keyword id="KW-1185">Reference proteome</keyword>
<reference key="1">
    <citation type="journal article" date="1992" name="Genes Dev.">
        <title>CIK1: a developmentally regulated spindle pole body-associated protein important for microtubule functions in Saccharomyces cerevisiae.</title>
        <authorList>
            <person name="Page B.D."/>
            <person name="Snyder M."/>
        </authorList>
    </citation>
    <scope>NUCLEOTIDE SEQUENCE [GENOMIC DNA]</scope>
</reference>
<reference key="2">
    <citation type="journal article" date="1997" name="Nature">
        <title>The nucleotide sequence of Saccharomyces cerevisiae chromosome XIII.</title>
        <authorList>
            <person name="Bowman S."/>
            <person name="Churcher C.M."/>
            <person name="Badcock K."/>
            <person name="Brown D."/>
            <person name="Chillingworth T."/>
            <person name="Connor R."/>
            <person name="Dedman K."/>
            <person name="Devlin K."/>
            <person name="Gentles S."/>
            <person name="Hamlin N."/>
            <person name="Hunt S."/>
            <person name="Jagels K."/>
            <person name="Lye G."/>
            <person name="Moule S."/>
            <person name="Odell C."/>
            <person name="Pearson D."/>
            <person name="Rajandream M.A."/>
            <person name="Rice P."/>
            <person name="Skelton J."/>
            <person name="Walsh S.V."/>
            <person name="Whitehead S."/>
            <person name="Barrell B.G."/>
        </authorList>
    </citation>
    <scope>NUCLEOTIDE SEQUENCE [LARGE SCALE GENOMIC DNA]</scope>
    <source>
        <strain>ATCC 204508 / S288c</strain>
    </source>
</reference>
<reference key="3">
    <citation type="journal article" date="2014" name="G3 (Bethesda)">
        <title>The reference genome sequence of Saccharomyces cerevisiae: Then and now.</title>
        <authorList>
            <person name="Engel S.R."/>
            <person name="Dietrich F.S."/>
            <person name="Fisk D.G."/>
            <person name="Binkley G."/>
            <person name="Balakrishnan R."/>
            <person name="Costanzo M.C."/>
            <person name="Dwight S.S."/>
            <person name="Hitz B.C."/>
            <person name="Karra K."/>
            <person name="Nash R.S."/>
            <person name="Weng S."/>
            <person name="Wong E.D."/>
            <person name="Lloyd P."/>
            <person name="Skrzypek M.S."/>
            <person name="Miyasato S.R."/>
            <person name="Simison M."/>
            <person name="Cherry J.M."/>
        </authorList>
    </citation>
    <scope>GENOME REANNOTATION</scope>
    <source>
        <strain>ATCC 204508 / S288c</strain>
    </source>
</reference>
<reference key="4">
    <citation type="journal article" date="1994" name="J. Cell Biol.">
        <title>Localization of the Kar3 kinesin heavy chain-related protein requires the Cik1 interacting protein.</title>
        <authorList>
            <person name="Page B.D."/>
            <person name="Satterwhite L.L."/>
            <person name="Rose M.D."/>
            <person name="Snyder M."/>
        </authorList>
    </citation>
    <scope>FUNCTION</scope>
    <scope>INTERACTION WITH KAR3</scope>
    <scope>SUBCELLULAR LOCATION</scope>
    <scope>DISRUPTION PHENOTYPE</scope>
</reference>
<reference key="5">
    <citation type="journal article" date="1999" name="J. Cell Biol.">
        <title>Differential regulation of the Kar3p kinesin-related protein by two associated proteins, Cik1p and Vik1p.</title>
        <authorList>
            <person name="Manning B.D."/>
            <person name="Barrett J.G."/>
            <person name="Wallace J.A."/>
            <person name="Granok H."/>
            <person name="Snyder M."/>
        </authorList>
    </citation>
    <scope>FUNCTION</scope>
    <scope>INTERACTION WITH KAR3</scope>
    <scope>SUBCELLULAR LOCATION</scope>
    <scope>INDUCTION</scope>
</reference>
<reference key="6">
    <citation type="journal article" date="2001" name="Genetics">
        <title>The Kar3-interacting protein Cik1p plays a critical role in passage through meiosis I in Saccharomyces cerevisiae.</title>
        <authorList>
            <person name="Shanks R.M.Q."/>
            <person name="Kamieniecki R.J."/>
            <person name="Dawson D.S."/>
        </authorList>
    </citation>
    <scope>FUNCTION</scope>
    <scope>SUBCELLULAR LOCATION</scope>
</reference>
<reference key="7">
    <citation type="journal article" date="2003" name="Nature">
        <title>Global analysis of protein expression in yeast.</title>
        <authorList>
            <person name="Ghaemmaghami S."/>
            <person name="Huh W.-K."/>
            <person name="Bower K."/>
            <person name="Howson R.W."/>
            <person name="Belle A."/>
            <person name="Dephoure N."/>
            <person name="O'Shea E.K."/>
            <person name="Weissman J.S."/>
        </authorList>
    </citation>
    <scope>LEVEL OF PROTEIN EXPRESSION [LARGE SCALE ANALYSIS]</scope>
</reference>
<reference key="8">
    <citation type="journal article" date="2007" name="Cell">
        <title>Vik1 modulates microtubule-Kar3 interactions through a motor domain that lacks an active site.</title>
        <authorList>
            <person name="Allingham J.S."/>
            <person name="Sproul L.R."/>
            <person name="Rayment I."/>
            <person name="Gilbert S.P."/>
        </authorList>
    </citation>
    <scope>FUNCTION</scope>
    <scope>INTERACTION WITH KAR3</scope>
</reference>
<reference key="9">
    <citation type="journal article" date="2014" name="Dev. Cell">
        <title>Minus-end-directed Kinesin-14 motors align antiparallel microtubules to control metaphase spindle length.</title>
        <authorList>
            <person name="Hepperla A.J."/>
            <person name="Willey P.T."/>
            <person name="Coombes C.E."/>
            <person name="Schuster B.M."/>
            <person name="Gerami-Nejad M."/>
            <person name="McClellan M."/>
            <person name="Mukherjee S."/>
            <person name="Fox J."/>
            <person name="Winey M."/>
            <person name="Odde D.J."/>
            <person name="O'Toole E."/>
            <person name="Gardner M.K."/>
        </authorList>
    </citation>
    <scope>FUNCTION</scope>
    <scope>SUBCELLULAR LOCATION</scope>
    <scope>DISRUPTION PHENOTYPE</scope>
</reference>